<gene>
    <name type="primary">Rpgrip1l</name>
    <name type="synonym">Ftm</name>
    <name type="synonym">Nphp8</name>
</gene>
<organism>
    <name type="scientific">Mus musculus</name>
    <name type="common">Mouse</name>
    <dbReference type="NCBI Taxonomy" id="10090"/>
    <lineage>
        <taxon>Eukaryota</taxon>
        <taxon>Metazoa</taxon>
        <taxon>Chordata</taxon>
        <taxon>Craniata</taxon>
        <taxon>Vertebrata</taxon>
        <taxon>Euteleostomi</taxon>
        <taxon>Mammalia</taxon>
        <taxon>Eutheria</taxon>
        <taxon>Euarchontoglires</taxon>
        <taxon>Glires</taxon>
        <taxon>Rodentia</taxon>
        <taxon>Myomorpha</taxon>
        <taxon>Muroidea</taxon>
        <taxon>Muridae</taxon>
        <taxon>Murinae</taxon>
        <taxon>Mus</taxon>
        <taxon>Mus</taxon>
    </lineage>
</organism>
<dbReference type="EMBL" id="AJ344253">
    <property type="protein sequence ID" value="CAC87257.1"/>
    <property type="molecule type" value="mRNA"/>
</dbReference>
<dbReference type="EMBL" id="AC139351">
    <property type="status" value="NOT_ANNOTATED_CDS"/>
    <property type="molecule type" value="Genomic_DNA"/>
</dbReference>
<dbReference type="EMBL" id="CH466525">
    <property type="protein sequence ID" value="EDL11076.1"/>
    <property type="molecule type" value="Genomic_DNA"/>
</dbReference>
<dbReference type="CCDS" id="CCDS22520.1"/>
<dbReference type="RefSeq" id="NP_775607.2">
    <property type="nucleotide sequence ID" value="NM_173431.2"/>
</dbReference>
<dbReference type="PDB" id="7YFU">
    <property type="method" value="X-ray"/>
    <property type="resolution" value="1.50 A"/>
    <property type="chains" value="A/B=104-144"/>
</dbReference>
<dbReference type="PDB" id="7YFV">
    <property type="method" value="X-ray"/>
    <property type="resolution" value="2.20 A"/>
    <property type="chains" value="A/B/C/D=42-97"/>
</dbReference>
<dbReference type="PDBsum" id="7YFU"/>
<dbReference type="PDBsum" id="7YFV"/>
<dbReference type="SMR" id="Q8CG73"/>
<dbReference type="BioGRID" id="232664">
    <property type="interactions" value="43"/>
</dbReference>
<dbReference type="CORUM" id="Q8CG73"/>
<dbReference type="FunCoup" id="Q8CG73">
    <property type="interactions" value="1938"/>
</dbReference>
<dbReference type="IntAct" id="Q8CG73">
    <property type="interactions" value="279"/>
</dbReference>
<dbReference type="STRING" id="10090.ENSMUSP00000042702"/>
<dbReference type="iPTMnet" id="Q8CG73"/>
<dbReference type="PhosphoSitePlus" id="Q8CG73"/>
<dbReference type="PaxDb" id="10090-ENSMUSP00000042702"/>
<dbReference type="PeptideAtlas" id="Q8CG73"/>
<dbReference type="ProteomicsDB" id="267530"/>
<dbReference type="Pumba" id="Q8CG73"/>
<dbReference type="Antibodypedia" id="28413">
    <property type="antibodies" value="108 antibodies from 27 providers"/>
</dbReference>
<dbReference type="DNASU" id="244585"/>
<dbReference type="Ensembl" id="ENSMUST00000047783.14">
    <property type="protein sequence ID" value="ENSMUSP00000042702.8"/>
    <property type="gene ID" value="ENSMUSG00000033282.15"/>
</dbReference>
<dbReference type="GeneID" id="244585"/>
<dbReference type="KEGG" id="mmu:244585"/>
<dbReference type="UCSC" id="uc009msp.1">
    <property type="organism name" value="mouse"/>
</dbReference>
<dbReference type="AGR" id="MGI:1920563"/>
<dbReference type="CTD" id="23322"/>
<dbReference type="MGI" id="MGI:1920563">
    <property type="gene designation" value="Rpgrip1l"/>
</dbReference>
<dbReference type="VEuPathDB" id="HostDB:ENSMUSG00000033282"/>
<dbReference type="eggNOG" id="ENOG502QSQG">
    <property type="taxonomic scope" value="Eukaryota"/>
</dbReference>
<dbReference type="GeneTree" id="ENSGT00520000055620"/>
<dbReference type="HOGENOM" id="CLU_002108_0_0_1"/>
<dbReference type="InParanoid" id="Q8CG73"/>
<dbReference type="OMA" id="HMERIRF"/>
<dbReference type="OrthoDB" id="2133912at2759"/>
<dbReference type="PhylomeDB" id="Q8CG73"/>
<dbReference type="TreeFam" id="TF328883"/>
<dbReference type="Reactome" id="R-MMU-5610787">
    <property type="pathway name" value="Hedgehog 'off' state"/>
</dbReference>
<dbReference type="Reactome" id="R-MMU-5620912">
    <property type="pathway name" value="Anchoring of the basal body to the plasma membrane"/>
</dbReference>
<dbReference type="BioGRID-ORCS" id="244585">
    <property type="hits" value="3 hits in 75 CRISPR screens"/>
</dbReference>
<dbReference type="ChiTaRS" id="Rpgrip1l">
    <property type="organism name" value="mouse"/>
</dbReference>
<dbReference type="PRO" id="PR:Q8CG73"/>
<dbReference type="Proteomes" id="UP000000589">
    <property type="component" value="Chromosome 8"/>
</dbReference>
<dbReference type="RNAct" id="Q8CG73">
    <property type="molecule type" value="protein"/>
</dbReference>
<dbReference type="Bgee" id="ENSMUSG00000033282">
    <property type="expression patterns" value="Expressed in animal zygote and 69 other cell types or tissues"/>
</dbReference>
<dbReference type="ExpressionAtlas" id="Q8CG73">
    <property type="expression patterns" value="baseline and differential"/>
</dbReference>
<dbReference type="GO" id="GO:0005930">
    <property type="term" value="C:axoneme"/>
    <property type="evidence" value="ECO:0000266"/>
    <property type="project" value="MGI"/>
</dbReference>
<dbReference type="GO" id="GO:0005923">
    <property type="term" value="C:bicellular tight junction"/>
    <property type="evidence" value="ECO:0007669"/>
    <property type="project" value="UniProtKB-SubCell"/>
</dbReference>
<dbReference type="GO" id="GO:0005911">
    <property type="term" value="C:cell-cell junction"/>
    <property type="evidence" value="ECO:0000250"/>
    <property type="project" value="UniProtKB"/>
</dbReference>
<dbReference type="GO" id="GO:0005813">
    <property type="term" value="C:centrosome"/>
    <property type="evidence" value="ECO:0000266"/>
    <property type="project" value="MGI"/>
</dbReference>
<dbReference type="GO" id="GO:0036064">
    <property type="term" value="C:ciliary basal body"/>
    <property type="evidence" value="ECO:0000314"/>
    <property type="project" value="MGI"/>
</dbReference>
<dbReference type="GO" id="GO:0035869">
    <property type="term" value="C:ciliary transition zone"/>
    <property type="evidence" value="ECO:0000314"/>
    <property type="project" value="MGI"/>
</dbReference>
<dbReference type="GO" id="GO:0005929">
    <property type="term" value="C:cilium"/>
    <property type="evidence" value="ECO:0000266"/>
    <property type="project" value="MGI"/>
</dbReference>
<dbReference type="GO" id="GO:0005737">
    <property type="term" value="C:cytoplasm"/>
    <property type="evidence" value="ECO:0000314"/>
    <property type="project" value="CACAO"/>
</dbReference>
<dbReference type="GO" id="GO:0005829">
    <property type="term" value="C:cytosol"/>
    <property type="evidence" value="ECO:0007669"/>
    <property type="project" value="Ensembl"/>
</dbReference>
<dbReference type="GO" id="GO:0016607">
    <property type="term" value="C:nuclear speck"/>
    <property type="evidence" value="ECO:0007669"/>
    <property type="project" value="Ensembl"/>
</dbReference>
<dbReference type="GO" id="GO:0005886">
    <property type="term" value="C:plasma membrane"/>
    <property type="evidence" value="ECO:0007669"/>
    <property type="project" value="Ensembl"/>
</dbReference>
<dbReference type="GO" id="GO:0031870">
    <property type="term" value="F:thromboxane A2 receptor binding"/>
    <property type="evidence" value="ECO:0007669"/>
    <property type="project" value="Ensembl"/>
</dbReference>
<dbReference type="GO" id="GO:0007420">
    <property type="term" value="P:brain development"/>
    <property type="evidence" value="ECO:0000315"/>
    <property type="project" value="MGI"/>
</dbReference>
<dbReference type="GO" id="GO:0043010">
    <property type="term" value="P:camera-type eye development"/>
    <property type="evidence" value="ECO:0000315"/>
    <property type="project" value="MGI"/>
</dbReference>
<dbReference type="GO" id="GO:0021549">
    <property type="term" value="P:cerebellum development"/>
    <property type="evidence" value="ECO:0000315"/>
    <property type="project" value="MGI"/>
</dbReference>
<dbReference type="GO" id="GO:0060271">
    <property type="term" value="P:cilium assembly"/>
    <property type="evidence" value="ECO:0000315"/>
    <property type="project" value="MGI"/>
</dbReference>
<dbReference type="GO" id="GO:0090102">
    <property type="term" value="P:cochlea development"/>
    <property type="evidence" value="ECO:0000315"/>
    <property type="project" value="MGI"/>
</dbReference>
<dbReference type="GO" id="GO:0022038">
    <property type="term" value="P:corpus callosum development"/>
    <property type="evidence" value="ECO:0000315"/>
    <property type="project" value="MGI"/>
</dbReference>
<dbReference type="GO" id="GO:0007368">
    <property type="term" value="P:determination of left/right symmetry"/>
    <property type="evidence" value="ECO:0000315"/>
    <property type="project" value="MGI"/>
</dbReference>
<dbReference type="GO" id="GO:0035115">
    <property type="term" value="P:embryonic forelimb morphogenesis"/>
    <property type="evidence" value="ECO:0000315"/>
    <property type="project" value="MGI"/>
</dbReference>
<dbReference type="GO" id="GO:0035116">
    <property type="term" value="P:embryonic hindlimb morphogenesis"/>
    <property type="evidence" value="ECO:0000315"/>
    <property type="project" value="MGI"/>
</dbReference>
<dbReference type="GO" id="GO:0001736">
    <property type="term" value="P:establishment of planar polarity"/>
    <property type="evidence" value="ECO:0000315"/>
    <property type="project" value="MGI"/>
</dbReference>
<dbReference type="GO" id="GO:0007163">
    <property type="term" value="P:establishment or maintenance of cell polarity"/>
    <property type="evidence" value="ECO:0000315"/>
    <property type="project" value="MGI"/>
</dbReference>
<dbReference type="GO" id="GO:0060322">
    <property type="term" value="P:head development"/>
    <property type="evidence" value="ECO:0000315"/>
    <property type="project" value="MGI"/>
</dbReference>
<dbReference type="GO" id="GO:0001701">
    <property type="term" value="P:in utero embryonic development"/>
    <property type="evidence" value="ECO:0000315"/>
    <property type="project" value="MGI"/>
</dbReference>
<dbReference type="GO" id="GO:0001822">
    <property type="term" value="P:kidney development"/>
    <property type="evidence" value="ECO:0000315"/>
    <property type="project" value="MGI"/>
</dbReference>
<dbReference type="GO" id="GO:0021670">
    <property type="term" value="P:lateral ventricle development"/>
    <property type="evidence" value="ECO:0000315"/>
    <property type="project" value="MGI"/>
</dbReference>
<dbReference type="GO" id="GO:0035108">
    <property type="term" value="P:limb morphogenesis"/>
    <property type="evidence" value="ECO:0000315"/>
    <property type="project" value="MGI"/>
</dbReference>
<dbReference type="GO" id="GO:0001889">
    <property type="term" value="P:liver development"/>
    <property type="evidence" value="ECO:0000315"/>
    <property type="project" value="MGI"/>
</dbReference>
<dbReference type="GO" id="GO:0045744">
    <property type="term" value="P:negative regulation of G protein-coupled receptor signaling pathway"/>
    <property type="evidence" value="ECO:0000250"/>
    <property type="project" value="UniProtKB"/>
</dbReference>
<dbReference type="GO" id="GO:0021532">
    <property type="term" value="P:neural tube patterning"/>
    <property type="evidence" value="ECO:0000315"/>
    <property type="project" value="MGI"/>
</dbReference>
<dbReference type="GO" id="GO:1905515">
    <property type="term" value="P:non-motile cilium assembly"/>
    <property type="evidence" value="ECO:0000315"/>
    <property type="project" value="MGI"/>
</dbReference>
<dbReference type="GO" id="GO:0043584">
    <property type="term" value="P:nose development"/>
    <property type="evidence" value="ECO:0000315"/>
    <property type="project" value="MGI"/>
</dbReference>
<dbReference type="GO" id="GO:0021772">
    <property type="term" value="P:olfactory bulb development"/>
    <property type="evidence" value="ECO:0000315"/>
    <property type="project" value="MGI"/>
</dbReference>
<dbReference type="GO" id="GO:0060039">
    <property type="term" value="P:pericardium development"/>
    <property type="evidence" value="ECO:0000315"/>
    <property type="project" value="MGI"/>
</dbReference>
<dbReference type="GO" id="GO:0008589">
    <property type="term" value="P:regulation of smoothened signaling pathway"/>
    <property type="evidence" value="ECO:0000315"/>
    <property type="project" value="MGI"/>
</dbReference>
<dbReference type="GO" id="GO:0021537">
    <property type="term" value="P:telencephalon development"/>
    <property type="evidence" value="ECO:0000315"/>
    <property type="project" value="MGI"/>
</dbReference>
<dbReference type="CDD" id="cd00030">
    <property type="entry name" value="C2"/>
    <property type="match status" value="1"/>
</dbReference>
<dbReference type="FunFam" id="2.60.40.150:FF:000196">
    <property type="entry name" value="Protein fantom"/>
    <property type="match status" value="1"/>
</dbReference>
<dbReference type="FunFam" id="2.60.40.150:FF:000073">
    <property type="entry name" value="protein fantom isoform X1"/>
    <property type="match status" value="1"/>
</dbReference>
<dbReference type="FunFam" id="2.60.40.150:FF:000075">
    <property type="entry name" value="protein fantom isoform X1"/>
    <property type="match status" value="1"/>
</dbReference>
<dbReference type="Gene3D" id="2.60.40.150">
    <property type="entry name" value="C2 domain"/>
    <property type="match status" value="3"/>
</dbReference>
<dbReference type="InterPro" id="IPR021656">
    <property type="entry name" value="C2-C2_1"/>
</dbReference>
<dbReference type="InterPro" id="IPR000008">
    <property type="entry name" value="C2_dom"/>
</dbReference>
<dbReference type="InterPro" id="IPR035892">
    <property type="entry name" value="C2_domain_sf"/>
</dbReference>
<dbReference type="InterPro" id="IPR041091">
    <property type="entry name" value="RPGRIP1_C"/>
</dbReference>
<dbReference type="InterPro" id="IPR031139">
    <property type="entry name" value="RPGRIP1_fam"/>
</dbReference>
<dbReference type="PANTHER" id="PTHR14240:SF4">
    <property type="entry name" value="PROTEIN FANTOM"/>
    <property type="match status" value="1"/>
</dbReference>
<dbReference type="PANTHER" id="PTHR14240">
    <property type="entry name" value="RETINITIS PIGMENTOSA GTPASE REGULATOR-INTERACTING PROTEIN"/>
    <property type="match status" value="1"/>
</dbReference>
<dbReference type="Pfam" id="PF00168">
    <property type="entry name" value="C2"/>
    <property type="match status" value="1"/>
</dbReference>
<dbReference type="Pfam" id="PF11618">
    <property type="entry name" value="C2-C2_1"/>
    <property type="match status" value="1"/>
</dbReference>
<dbReference type="Pfam" id="PF18111">
    <property type="entry name" value="RPGR1_C"/>
    <property type="match status" value="1"/>
</dbReference>
<dbReference type="SMART" id="SM00239">
    <property type="entry name" value="C2"/>
    <property type="match status" value="1"/>
</dbReference>
<dbReference type="SUPFAM" id="SSF49562">
    <property type="entry name" value="C2 domain (Calcium/lipid-binding domain, CaLB)"/>
    <property type="match status" value="2"/>
</dbReference>
<dbReference type="PROSITE" id="PS50004">
    <property type="entry name" value="C2"/>
    <property type="match status" value="2"/>
</dbReference>
<name>FTM_MOUSE</name>
<comment type="function">
    <text evidence="1 5 6 7 8 9">Negatively regulates signaling through the G-protein coupled thromboxane A2 receptor (TBXA2R) (By similarity). May be involved in mechanisms like programmed cell death, craniofacial development, patterning of the limbs, and formation of the left-right axis. Involved in the organization of apical junctions; the function is proposed to implicate a NPHP1-4-8 module. Does not seem to be strictly required for ciliogenesis (By similarity). Involved in establishment of planar cell polarity such as in cochlear sensory epithelium and is proposed to implicate stabilization of disheveled proteins (PubMed:22927466). Involved in regulation of proteasomal activity at the primary cilium probably implicating association with PSDM2 (PubMed:26150391).</text>
</comment>
<comment type="subunit">
    <text evidence="1 7 9">Interacts with NPHP4 and NPHP1; NPHP1, NPHP4 and RPGRIP1L are proposed to form a functional NPHP1-4-8 module localized to cell-cell contacts and the ciliary transition zone; NPHP4 mediates the interaction between NPHP1 and RPGRIP1L. Interacts with IQCB1; the interaction likely requires additional interactors (PubMed:21565611). Interacts with TBXA2R (via C-terminus), RPGR, NEK4. Interacts with NPHP4, INVS and DVL2; proposed to form a complex involved in DVL2 stabilization (By similarity). Interacts with PSMD2 (PubMed:26150391).</text>
</comment>
<comment type="interaction">
    <interactant intactId="EBI-4281130">
        <id>Q8CG73</id>
    </interactant>
    <interactant intactId="EBI-4282243">
        <id>Q8BP00</id>
        <label>Iqcb1</label>
    </interactant>
    <organismsDiffer>false</organismsDiffer>
    <experiments>2</experiments>
</comment>
<comment type="interaction">
    <interactant intactId="EBI-4281130">
        <id>Q8CG73</id>
    </interactant>
    <interactant intactId="EBI-4281265">
        <id>P59240</id>
        <label>Nphp4</label>
    </interactant>
    <organismsDiffer>false</organismsDiffer>
    <experiments>4</experiments>
</comment>
<comment type="subcellular location">
    <subcellularLocation>
        <location>Cytoplasm</location>
    </subcellularLocation>
    <subcellularLocation>
        <location evidence="7">Cytoplasm</location>
        <location evidence="7">Cytoskeleton</location>
        <location evidence="7">Cilium basal body</location>
    </subcellularLocation>
    <subcellularLocation>
        <location>Cytoplasm</location>
        <location>Cytoskeleton</location>
        <location>Cilium axoneme</location>
    </subcellularLocation>
    <subcellularLocation>
        <location evidence="9">Cytoplasm</location>
        <location evidence="9">Cytoskeleton</location>
        <location evidence="9">Microtubule organizing center</location>
        <location evidence="9">Centrosome</location>
    </subcellularLocation>
    <subcellularLocation>
        <location evidence="7">Cell junction</location>
        <location evidence="7">Tight junction</location>
    </subcellularLocation>
    <text evidence="7 8 9">In cultured renal cells, it localizes diffusely in the cytoplasm but, as cells approach confluence, it accumulates to basolateral tight junctions. Localizes to the ciliary transition zone.</text>
</comment>
<comment type="tissue specificity">
    <text evidence="5">Ubiquitously expressed. Not found in heart and skin.</text>
</comment>
<comment type="developmental stage">
    <text evidence="5">Expression was detected throughout embryonic development as early as 8.5 dpc.</text>
</comment>
<comment type="similarity">
    <text evidence="10">Belongs to the RPGRIP1 family.</text>
</comment>
<proteinExistence type="evidence at protein level"/>
<reference key="1">
    <citation type="journal article" date="2002" name="Mamm. Genome">
        <title>The mouse Fused toes (Ft) mutation is the result of a 1.6-Mb deletion including the entire Iroquois B gene cluster.</title>
        <authorList>
            <person name="Peters T."/>
            <person name="Ausmeier K."/>
            <person name="Dildrop R."/>
            <person name="Ruether U."/>
        </authorList>
    </citation>
    <scope>NUCLEOTIDE SEQUENCE [MRNA]</scope>
    <scope>FUNCTION</scope>
    <source>
        <strain>Swiss Webster / NIH</strain>
    </source>
</reference>
<reference key="2">
    <citation type="journal article" date="2009" name="PLoS Biol.">
        <title>Lineage-specific biology revealed by a finished genome assembly of the mouse.</title>
        <authorList>
            <person name="Church D.M."/>
            <person name="Goodstadt L."/>
            <person name="Hillier L.W."/>
            <person name="Zody M.C."/>
            <person name="Goldstein S."/>
            <person name="She X."/>
            <person name="Bult C.J."/>
            <person name="Agarwala R."/>
            <person name="Cherry J.L."/>
            <person name="DiCuccio M."/>
            <person name="Hlavina W."/>
            <person name="Kapustin Y."/>
            <person name="Meric P."/>
            <person name="Maglott D."/>
            <person name="Birtle Z."/>
            <person name="Marques A.C."/>
            <person name="Graves T."/>
            <person name="Zhou S."/>
            <person name="Teague B."/>
            <person name="Potamousis K."/>
            <person name="Churas C."/>
            <person name="Place M."/>
            <person name="Herschleb J."/>
            <person name="Runnheim R."/>
            <person name="Forrest D."/>
            <person name="Amos-Landgraf J."/>
            <person name="Schwartz D.C."/>
            <person name="Cheng Z."/>
            <person name="Lindblad-Toh K."/>
            <person name="Eichler E.E."/>
            <person name="Ponting C.P."/>
        </authorList>
    </citation>
    <scope>NUCLEOTIDE SEQUENCE [LARGE SCALE GENOMIC DNA]</scope>
    <source>
        <strain>C57BL/6J</strain>
    </source>
</reference>
<reference key="3">
    <citation type="submission" date="2005-07" db="EMBL/GenBank/DDBJ databases">
        <authorList>
            <person name="Mural R.J."/>
            <person name="Adams M.D."/>
            <person name="Myers E.W."/>
            <person name="Smith H.O."/>
            <person name="Venter J.C."/>
        </authorList>
    </citation>
    <scope>NUCLEOTIDE SEQUENCE [LARGE SCALE GENOMIC DNA]</scope>
</reference>
<reference key="4">
    <citation type="journal article" date="1999" name="Mamm. Genome">
        <title>Cloning of Fatso (Fto), a novel gene deleted by the Fused toes (Ft) mouse mutation.</title>
        <authorList>
            <person name="Peters T."/>
            <person name="Ausmeier K."/>
            <person name="Ruether U."/>
        </authorList>
    </citation>
    <scope>FUNCTION</scope>
    <scope>TISSUE SPECIFICITY</scope>
    <scope>DEVELOPMENTAL STAGE</scope>
</reference>
<reference key="5">
    <citation type="journal article" date="2011" name="Cell">
        <title>Mapping the NPHP-JBTS-MKS protein network reveals ciliopathy disease genes and pathways.</title>
        <authorList>
            <person name="Sang L."/>
            <person name="Miller J.J."/>
            <person name="Corbit K.C."/>
            <person name="Giles R.H."/>
            <person name="Brauer M.J."/>
            <person name="Otto E.A."/>
            <person name="Baye L.M."/>
            <person name="Wen X."/>
            <person name="Scales S.J."/>
            <person name="Kwong M."/>
            <person name="Huntzicker E.G."/>
            <person name="Sfakianos M.K."/>
            <person name="Sandoval W."/>
            <person name="Bazan J.F."/>
            <person name="Kulkarni P."/>
            <person name="Garcia-Gonzalo F.R."/>
            <person name="Seol A.D."/>
            <person name="O'Toole J.F."/>
            <person name="Held S."/>
            <person name="Reutter H.M."/>
            <person name="Lane W.S."/>
            <person name="Rafiq M.A."/>
            <person name="Noor A."/>
            <person name="Ansar M."/>
            <person name="Devi A.R."/>
            <person name="Sheffield V.C."/>
            <person name="Slusarski D.C."/>
            <person name="Vincent J.B."/>
            <person name="Doherty D.A."/>
            <person name="Hildebrandt F."/>
            <person name="Reiter J.F."/>
            <person name="Jackson P.K."/>
        </authorList>
    </citation>
    <scope>SUBCELLULAR LOCATION</scope>
    <scope>INTERACTION WITH NPHP4 AND IQCB1</scope>
</reference>
<reference key="6">
    <citation type="journal article" date="2012" name="J. Cell Biol.">
        <title>Dishevelled stabilization by the ciliopathy protein Rpgrip1l is essential for planar cell polarity.</title>
        <authorList>
            <person name="Mahuzier A."/>
            <person name="Gaude H.M."/>
            <person name="Grampa V."/>
            <person name="Anselme I."/>
            <person name="Silbermann F."/>
            <person name="Leroux-Berger M."/>
            <person name="Delacour D."/>
            <person name="Ezan J."/>
            <person name="Montcouquiol M."/>
            <person name="Saunier S."/>
            <person name="Schneider-Maunoury S."/>
            <person name="Vesque C."/>
        </authorList>
    </citation>
    <scope>FUNCTION</scope>
    <scope>SUBCELLULAR LOCATION</scope>
</reference>
<reference key="7">
    <citation type="journal article" date="2015" name="J. Cell Biol.">
        <title>The transition zone protein Rpgrip1l regulates proteasomal activity at the primary cilium.</title>
        <authorList>
            <person name="Gerhardt C."/>
            <person name="Lier J.M."/>
            <person name="Burmuehl S."/>
            <person name="Struchtrup A."/>
            <person name="Deutschmann K."/>
            <person name="Vetter M."/>
            <person name="Leu T."/>
            <person name="Reeg S."/>
            <person name="Grune T."/>
            <person name="Ruether U."/>
        </authorList>
    </citation>
    <scope>SUBCELLULAR LOCATION</scope>
    <scope>FUNCTION</scope>
    <scope>INTERACTION WITH PSMD2</scope>
</reference>
<feature type="chain" id="PRO_0000291268" description="Protein fantom">
    <location>
        <begin position="1"/>
        <end position="1264"/>
    </location>
</feature>
<feature type="domain" description="C2 1" evidence="3">
    <location>
        <begin position="577"/>
        <end position="714"/>
    </location>
</feature>
<feature type="domain" description="C2 2" evidence="3">
    <location>
        <begin position="773"/>
        <end position="897"/>
    </location>
</feature>
<feature type="region of interest" description="Disordered" evidence="4">
    <location>
        <begin position="979"/>
        <end position="1018"/>
    </location>
</feature>
<feature type="region of interest" description="Disordered" evidence="4">
    <location>
        <begin position="1047"/>
        <end position="1093"/>
    </location>
</feature>
<feature type="coiled-coil region" evidence="2">
    <location>
        <begin position="64"/>
        <end position="143"/>
    </location>
</feature>
<feature type="coiled-coil region" evidence="2">
    <location>
        <begin position="196"/>
        <end position="268"/>
    </location>
</feature>
<feature type="coiled-coil region" evidence="2">
    <location>
        <begin position="299"/>
        <end position="454"/>
    </location>
</feature>
<feature type="coiled-coil region" evidence="2">
    <location>
        <begin position="488"/>
        <end position="555"/>
    </location>
</feature>
<feature type="compositionally biased region" description="Acidic residues" evidence="4">
    <location>
        <begin position="1056"/>
        <end position="1080"/>
    </location>
</feature>
<feature type="sequence conflict" description="In Ref. 1; CAC87257." evidence="10" ref="1">
    <original>N</original>
    <variation>S</variation>
    <location>
        <position position="759"/>
    </location>
</feature>
<feature type="sequence conflict" description="In Ref. 1; CAC87257." evidence="10" ref="1">
    <original>K</original>
    <variation>R</variation>
    <location>
        <position position="797"/>
    </location>
</feature>
<feature type="helix" evidence="12">
    <location>
        <begin position="47"/>
        <end position="86"/>
    </location>
</feature>
<feature type="helix" evidence="11">
    <location>
        <begin position="106"/>
        <end position="141"/>
    </location>
</feature>
<sequence>MSGPSDETAGDLPVKDTGLNLFGVGGLQETSTARTVKTRQAVSRVSREELEDRFLRLHDENILLKQHARKQEDKIKRMATKLIRLVNDKKRYERVGGGPKRLGRDVEMEEMIEQLQEKVHELERQNEVLKNRLISAKQQLQVQGHRQTSYSRVQARVNTGRRRASASAGSQECPGKGLRFQNVDEAETVQPTLTKYSNSLLEEARGEIRNLENVIQSQRGQIEELEHLAEILKTQLKRKENEIELSLLQLREQQATDQRSNIRDNVETIKLHKQLVEKSNALSVIEGKFIQLQEKQRTLRISHDALMANGDELNKQLKEQRLKCCSLEKQLHSVRFSERRVEELQDRINDLEKERELLKENYDKLYNSAFSAAHEEQWKLKEQQMKVQIAQLETALKSDLTDKTEVLDKLKTERDQNEKLVQENRDLQLQCLQQKQRLHELQSRLKFFNQESDINADDLSEALLLIKAQKEQKNGDLSFLEKVDSKINKDLDRSMKELQATHAETVQELEKTRNMLIMQHKINKDYQMEVETVTQKMENLQQDYELKVEQYVHLLDIRAARIQKLEAQLKDIAYGTKQYKFKPEIMPDDSVDEFDETIHLERGENLFEIHINKVTFSSEVLRASGDKELVTFCTYAFYDFELQTTPIVRGLYPEYNFTSQYLVHVNDLFLQYIQKNTVTLELHQAHSTDYETIAACQLRFHEILEKSGRIFCTTSLVGTKGDIPNFGTVEYWFRLRVPMDQAIRLYRERAKALGYITSNFKKPEKMQLSSQQAATTAQISPAESTDGNLNELHVTVKCCTGLQSRASYLQPHAYVVYKFFDFPDHDTAIVPSSNDPQFDDHMCFPVPMNMDLDRYLKSESLSFYVFDDSDTQENIYMGKVNVPLISLAHDKCISGIFELMDKEKHAAGTIQVILKWKFTYLPPSGSITTEDLGKFVCREEPEAVQRLPPKSSDVTSVVAPKPKPRQRLTFVDKKVSFADTISHPSPETSPPPKDIKDSSPEVGPKPENGLSAVAYPSKESGVAKVEENVGEMQQGKEDDISFLSEGQLASGSVASSEDETEITEELEPEDEDRSASDSDDCIIPSSVSTNTKQPSEEIRIEIIALNLNDSQITREDTIQRLFIECRFYSLPAEETPMSLPKPQSGQWVYYNYSNVIYLDKENNPAVRDILKAILQRRELPHRSVRFTVVSDPPEDEQDLECEDIGVAHVDLADLFQKGRDIIEQDIDVLDARTDGGTIGKLKVTVEALHALRSVYEQNRKDLEA</sequence>
<evidence type="ECO:0000250" key="1">
    <source>
        <dbReference type="UniProtKB" id="Q68CZ1"/>
    </source>
</evidence>
<evidence type="ECO:0000255" key="2"/>
<evidence type="ECO:0000255" key="3">
    <source>
        <dbReference type="PROSITE-ProRule" id="PRU00041"/>
    </source>
</evidence>
<evidence type="ECO:0000256" key="4">
    <source>
        <dbReference type="SAM" id="MobiDB-lite"/>
    </source>
</evidence>
<evidence type="ECO:0000269" key="5">
    <source>
    </source>
</evidence>
<evidence type="ECO:0000269" key="6">
    <source>
    </source>
</evidence>
<evidence type="ECO:0000269" key="7">
    <source>
    </source>
</evidence>
<evidence type="ECO:0000269" key="8">
    <source>
    </source>
</evidence>
<evidence type="ECO:0000269" key="9">
    <source>
    </source>
</evidence>
<evidence type="ECO:0000305" key="10"/>
<evidence type="ECO:0007829" key="11">
    <source>
        <dbReference type="PDB" id="7YFU"/>
    </source>
</evidence>
<evidence type="ECO:0007829" key="12">
    <source>
        <dbReference type="PDB" id="7YFV"/>
    </source>
</evidence>
<accession>Q8CG73</accession>
<accession>G3X958</accession>
<keyword id="KW-0002">3D-structure</keyword>
<keyword id="KW-0965">Cell junction</keyword>
<keyword id="KW-0966">Cell projection</keyword>
<keyword id="KW-0969">Cilium</keyword>
<keyword id="KW-0175">Coiled coil</keyword>
<keyword id="KW-0963">Cytoplasm</keyword>
<keyword id="KW-0206">Cytoskeleton</keyword>
<keyword id="KW-1185">Reference proteome</keyword>
<keyword id="KW-0677">Repeat</keyword>
<keyword id="KW-0796">Tight junction</keyword>
<protein>
    <recommendedName>
        <fullName>Protein fantom</fullName>
    </recommendedName>
    <alternativeName>
        <fullName>Nephrocystin-8</fullName>
    </alternativeName>
    <alternativeName>
        <fullName>RPGR-interacting protein 1-like protein</fullName>
        <shortName>RPGRIP1-like protein</shortName>
    </alternativeName>
</protein>